<evidence type="ECO:0000250" key="1"/>
<evidence type="ECO:0000255" key="2"/>
<evidence type="ECO:0000255" key="3">
    <source>
        <dbReference type="PROSITE-ProRule" id="PRU00114"/>
    </source>
</evidence>
<evidence type="ECO:0000269" key="4">
    <source>
    </source>
</evidence>
<evidence type="ECO:0000269" key="5">
    <source>
    </source>
</evidence>
<evidence type="ECO:0000305" key="6"/>
<evidence type="ECO:0000312" key="7">
    <source>
        <dbReference type="HGNC" id="HGNC:1142"/>
    </source>
</evidence>
<protein>
    <recommendedName>
        <fullName evidence="6">Butyrophilin-like protein 2</fullName>
        <shortName>BTL-II</shortName>
    </recommendedName>
</protein>
<organism>
    <name type="scientific">Homo sapiens</name>
    <name type="common">Human</name>
    <dbReference type="NCBI Taxonomy" id="9606"/>
    <lineage>
        <taxon>Eukaryota</taxon>
        <taxon>Metazoa</taxon>
        <taxon>Chordata</taxon>
        <taxon>Craniata</taxon>
        <taxon>Vertebrata</taxon>
        <taxon>Euteleostomi</taxon>
        <taxon>Mammalia</taxon>
        <taxon>Eutheria</taxon>
        <taxon>Euarchontoglires</taxon>
        <taxon>Primates</taxon>
        <taxon>Haplorrhini</taxon>
        <taxon>Catarrhini</taxon>
        <taxon>Hominidae</taxon>
        <taxon>Homo</taxon>
    </lineage>
</organism>
<gene>
    <name evidence="7" type="primary">BTNL2</name>
</gene>
<reference key="1">
    <citation type="journal article" date="2000" name="Immunogenetics">
        <title>BTL-II: a polymorphic locus with homology to the butyrophilin gene family, located at the border of the major histocompatibility complex class II and class III regions in human and mouse.</title>
        <authorList>
            <person name="Stammers M."/>
            <person name="Rowen L."/>
            <person name="Rhodes D."/>
            <person name="Trowsdale J."/>
            <person name="Beck S."/>
        </authorList>
    </citation>
    <scope>NUCLEOTIDE SEQUENCE [GENOMIC DNA] (ISOFORM 1)</scope>
</reference>
<reference key="2">
    <citation type="journal article" date="2005" name="Nat. Genet.">
        <title>Sarcoidosis is associated with a truncating splice site mutation in BTNL2.</title>
        <authorList>
            <person name="Valentonyte R."/>
            <person name="Hampe J."/>
            <person name="Huse K."/>
            <person name="Rosenstiel P."/>
            <person name="Albrecht M."/>
            <person name="Stenzel A."/>
            <person name="Nagy M."/>
            <person name="Gaede K.I."/>
            <person name="Franke A."/>
            <person name="Haesler R."/>
            <person name="Koch A."/>
            <person name="Lengauer T."/>
            <person name="Seegert D."/>
            <person name="Reiling N."/>
            <person name="Ehlers S."/>
            <person name="Schwinger E."/>
            <person name="Platzer M."/>
            <person name="Krawczak M."/>
            <person name="Mueller-Quernheim J."/>
            <person name="Schuermann M."/>
            <person name="Schreiber S."/>
        </authorList>
    </citation>
    <scope>NUCLEOTIDE SEQUENCE [GENOMIC DNA] (ISOFORMS 2 AND 3)</scope>
    <scope>SUBCELLULAR LOCATION</scope>
    <scope>TISSUE SPECIFICITY</scope>
    <scope>INDUCTION</scope>
    <scope>INVOLVEMENT IN SS2</scope>
</reference>
<reference key="3">
    <citation type="journal article" date="2005" name="Nat. Genet.">
        <authorList>
            <person name="Valentonyte R."/>
            <person name="Hampe J."/>
            <person name="Huse K."/>
            <person name="Rosenstiel P."/>
            <person name="Albrecht M."/>
            <person name="Stenzel A."/>
            <person name="Nagy M."/>
            <person name="Gaede K.I."/>
            <person name="Franke A."/>
            <person name="Haesler R."/>
            <person name="Koch A."/>
            <person name="Lengauer T."/>
            <person name="Seegert D."/>
            <person name="Reiling N."/>
            <person name="Ehlers S."/>
            <person name="Schwinger E."/>
            <person name="Platzer M."/>
            <person name="Krawczak M."/>
            <person name="Mueller-Quernheim J."/>
            <person name="Schuermann M."/>
            <person name="Schreiber S."/>
        </authorList>
    </citation>
    <scope>ERRATUM OF PUBMED:15735647</scope>
</reference>
<reference key="4">
    <citation type="journal article" date="2003" name="Nature">
        <title>The DNA sequence and analysis of human chromosome 6.</title>
        <authorList>
            <person name="Mungall A.J."/>
            <person name="Palmer S.A."/>
            <person name="Sims S.K."/>
            <person name="Edwards C.A."/>
            <person name="Ashurst J.L."/>
            <person name="Wilming L."/>
            <person name="Jones M.C."/>
            <person name="Horton R."/>
            <person name="Hunt S.E."/>
            <person name="Scott C.E."/>
            <person name="Gilbert J.G.R."/>
            <person name="Clamp M.E."/>
            <person name="Bethel G."/>
            <person name="Milne S."/>
            <person name="Ainscough R."/>
            <person name="Almeida J.P."/>
            <person name="Ambrose K.D."/>
            <person name="Andrews T.D."/>
            <person name="Ashwell R.I.S."/>
            <person name="Babbage A.K."/>
            <person name="Bagguley C.L."/>
            <person name="Bailey J."/>
            <person name="Banerjee R."/>
            <person name="Barker D.J."/>
            <person name="Barlow K.F."/>
            <person name="Bates K."/>
            <person name="Beare D.M."/>
            <person name="Beasley H."/>
            <person name="Beasley O."/>
            <person name="Bird C.P."/>
            <person name="Blakey S.E."/>
            <person name="Bray-Allen S."/>
            <person name="Brook J."/>
            <person name="Brown A.J."/>
            <person name="Brown J.Y."/>
            <person name="Burford D.C."/>
            <person name="Burrill W."/>
            <person name="Burton J."/>
            <person name="Carder C."/>
            <person name="Carter N.P."/>
            <person name="Chapman J.C."/>
            <person name="Clark S.Y."/>
            <person name="Clark G."/>
            <person name="Clee C.M."/>
            <person name="Clegg S."/>
            <person name="Cobley V."/>
            <person name="Collier R.E."/>
            <person name="Collins J.E."/>
            <person name="Colman L.K."/>
            <person name="Corby N.R."/>
            <person name="Coville G.J."/>
            <person name="Culley K.M."/>
            <person name="Dhami P."/>
            <person name="Davies J."/>
            <person name="Dunn M."/>
            <person name="Earthrowl M.E."/>
            <person name="Ellington A.E."/>
            <person name="Evans K.A."/>
            <person name="Faulkner L."/>
            <person name="Francis M.D."/>
            <person name="Frankish A."/>
            <person name="Frankland J."/>
            <person name="French L."/>
            <person name="Garner P."/>
            <person name="Garnett J."/>
            <person name="Ghori M.J."/>
            <person name="Gilby L.M."/>
            <person name="Gillson C.J."/>
            <person name="Glithero R.J."/>
            <person name="Grafham D.V."/>
            <person name="Grant M."/>
            <person name="Gribble S."/>
            <person name="Griffiths C."/>
            <person name="Griffiths M.N.D."/>
            <person name="Hall R."/>
            <person name="Halls K.S."/>
            <person name="Hammond S."/>
            <person name="Harley J.L."/>
            <person name="Hart E.A."/>
            <person name="Heath P.D."/>
            <person name="Heathcott R."/>
            <person name="Holmes S.J."/>
            <person name="Howden P.J."/>
            <person name="Howe K.L."/>
            <person name="Howell G.R."/>
            <person name="Huckle E."/>
            <person name="Humphray S.J."/>
            <person name="Humphries M.D."/>
            <person name="Hunt A.R."/>
            <person name="Johnson C.M."/>
            <person name="Joy A.A."/>
            <person name="Kay M."/>
            <person name="Keenan S.J."/>
            <person name="Kimberley A.M."/>
            <person name="King A."/>
            <person name="Laird G.K."/>
            <person name="Langford C."/>
            <person name="Lawlor S."/>
            <person name="Leongamornlert D.A."/>
            <person name="Leversha M."/>
            <person name="Lloyd C.R."/>
            <person name="Lloyd D.M."/>
            <person name="Loveland J.E."/>
            <person name="Lovell J."/>
            <person name="Martin S."/>
            <person name="Mashreghi-Mohammadi M."/>
            <person name="Maslen G.L."/>
            <person name="Matthews L."/>
            <person name="McCann O.T."/>
            <person name="McLaren S.J."/>
            <person name="McLay K."/>
            <person name="McMurray A."/>
            <person name="Moore M.J.F."/>
            <person name="Mullikin J.C."/>
            <person name="Niblett D."/>
            <person name="Nickerson T."/>
            <person name="Novik K.L."/>
            <person name="Oliver K."/>
            <person name="Overton-Larty E.K."/>
            <person name="Parker A."/>
            <person name="Patel R."/>
            <person name="Pearce A.V."/>
            <person name="Peck A.I."/>
            <person name="Phillimore B.J.C.T."/>
            <person name="Phillips S."/>
            <person name="Plumb R.W."/>
            <person name="Porter K.M."/>
            <person name="Ramsey Y."/>
            <person name="Ranby S.A."/>
            <person name="Rice C.M."/>
            <person name="Ross M.T."/>
            <person name="Searle S.M."/>
            <person name="Sehra H.K."/>
            <person name="Sheridan E."/>
            <person name="Skuce C.D."/>
            <person name="Smith S."/>
            <person name="Smith M."/>
            <person name="Spraggon L."/>
            <person name="Squares S.L."/>
            <person name="Steward C.A."/>
            <person name="Sycamore N."/>
            <person name="Tamlyn-Hall G."/>
            <person name="Tester J."/>
            <person name="Theaker A.J."/>
            <person name="Thomas D.W."/>
            <person name="Thorpe A."/>
            <person name="Tracey A."/>
            <person name="Tromans A."/>
            <person name="Tubby B."/>
            <person name="Wall M."/>
            <person name="Wallis J.M."/>
            <person name="West A.P."/>
            <person name="White S.S."/>
            <person name="Whitehead S.L."/>
            <person name="Whittaker H."/>
            <person name="Wild A."/>
            <person name="Willey D.J."/>
            <person name="Wilmer T.E."/>
            <person name="Wood J.M."/>
            <person name="Wray P.W."/>
            <person name="Wyatt J.C."/>
            <person name="Young L."/>
            <person name="Younger R.M."/>
            <person name="Bentley D.R."/>
            <person name="Coulson A."/>
            <person name="Durbin R.M."/>
            <person name="Hubbard T."/>
            <person name="Sulston J.E."/>
            <person name="Dunham I."/>
            <person name="Rogers J."/>
            <person name="Beck S."/>
        </authorList>
    </citation>
    <scope>NUCLEOTIDE SEQUENCE [LARGE SCALE GENOMIC DNA]</scope>
</reference>
<reference key="5">
    <citation type="journal article" date="2004" name="Genome Res.">
        <title>The status, quality, and expansion of the NIH full-length cDNA project: the Mammalian Gene Collection (MGC).</title>
        <authorList>
            <consortium name="The MGC Project Team"/>
        </authorList>
    </citation>
    <scope>NUCLEOTIDE SEQUENCE [LARGE SCALE MRNA] (ISOFORMS 4 AND 8)</scope>
    <scope>VARIANT GLY-360</scope>
</reference>
<reference key="6">
    <citation type="journal article" date="2004" name="Nat. Genet.">
        <title>Widespread occurrence of alternative splicing at NAGNAG acceptors contributes to proteome plasticity.</title>
        <authorList>
            <person name="Hiller M."/>
            <person name="Huse K."/>
            <person name="Szafranski K."/>
            <person name="Jahn N."/>
            <person name="Hampe J."/>
            <person name="Schreiber S."/>
            <person name="Backofen R."/>
            <person name="Platzer M."/>
        </authorList>
    </citation>
    <scope>NUCLEOTIDE SEQUENCE [MRNA] OF 1-109 (ISOFORMS 1/2/3)</scope>
</reference>
<comment type="function">
    <text evidence="1">Negative regulator of T-cell proliferation.</text>
</comment>
<comment type="interaction">
    <interactant intactId="EBI-25911105">
        <id>Q9UIR0-4</id>
    </interactant>
    <interactant intactId="EBI-748974">
        <id>Q96CV9</id>
        <label>OPTN</label>
    </interactant>
    <organismsDiffer>false</organismsDiffer>
    <experiments>3</experiments>
</comment>
<comment type="subcellular location">
    <subcellularLocation>
        <location evidence="5">Membrane</location>
        <topology evidence="5">Single-pass type II membrane protein</topology>
    </subcellularLocation>
    <text>Isoform 2 is present in the nuclear, vesicle and plasma membranes, isoform 3 is found in cytoplasmic vesicle structures and is not membrane bound.</text>
</comment>
<comment type="alternative products">
    <event type="alternative splicing"/>
    <isoform>
        <id>Q9UIR0-7</id>
        <name>7</name>
        <sequence type="displayed"/>
    </isoform>
    <isoform>
        <id>Q9UIR0-1</id>
        <name>1</name>
        <sequence type="described" ref="VSP_062057 VSP_062058"/>
    </isoform>
    <isoform>
        <id>Q9UIR0-2</id>
        <name>2</name>
        <name>Long</name>
        <sequence type="described" ref="VSP_062054"/>
    </isoform>
    <isoform>
        <id>Q9UIR0-3</id>
        <name>3</name>
        <name>Short</name>
        <sequence type="described" ref="VSP_062054 VSP_062055 VSP_062056"/>
    </isoform>
    <isoform>
        <id>Q9UIR0-4</id>
        <name>4</name>
        <sequence type="described" ref="VSP_062051 VSP_062057 VSP_062058"/>
    </isoform>
    <isoform>
        <id>Q9UIR0-8</id>
        <name>8</name>
        <sequence type="described" ref="VSP_062052 VSP_062053"/>
    </isoform>
</comment>
<comment type="tissue specificity">
    <text evidence="5">Expressed in brain, heart, kidney, liver, pancreas, ovary, leukocyte, small intestine, testis and thymus.</text>
</comment>
<comment type="induction">
    <text evidence="5">By pro-inflammatory cytokines such as TNF and IL1B/interleukin-1 beta.</text>
</comment>
<comment type="polymorphism">
    <text evidence="6">The sequence shown corresponds to the translation of the reference genome assembly (GRCh38/hg38) with Ser at position 360. This variant p.Gly360Ser is associated with an increased risk for sarcoidosis.</text>
</comment>
<comment type="disease" evidence="5">
    <disease id="DI-02732">
        <name>Sarcoidosis 2</name>
        <acronym>SS2</acronym>
        <description>An idiopathic, systemic, inflammatory disease characterized by the formation of immune granulomas in involved organs. Granulomas predominantly invade the lungs and the lymphatic system, but also skin, liver, spleen, eyes and other organs may be involved.</description>
        <dbReference type="MIM" id="612387"/>
    </disease>
    <text>Disease susceptibility is associated with variants affecting the gene represented in this entry.</text>
</comment>
<comment type="miscellaneous">
    <molecule>Isoform 8</molecule>
    <text evidence="6">May be produced at very low levels due to a premature stop codon in the mRNA, leading to nonsense-mediated mRNA decay.</text>
</comment>
<comment type="similarity">
    <text evidence="6">Belongs to the immunoglobulin superfamily. BTN/MOG family.</text>
</comment>
<comment type="sequence caution" evidence="6">
    <conflict type="erroneous translation">
        <sequence resource="EMBL-CDS" id="AAI19669"/>
    </conflict>
    <text>Wrong choice of frame.</text>
</comment>
<comment type="sequence caution" evidence="6">
    <conflict type="erroneous gene model prediction">
        <sequence resource="EMBL-CDS" id="CAC69895"/>
    </conflict>
</comment>
<comment type="sequence caution" evidence="6">
    <conflict type="erroneous gene model prediction">
        <sequence resource="EMBL-CDS" id="CAI42180"/>
    </conflict>
</comment>
<feature type="chain" id="PRO_0000014537" description="Butyrophilin-like protein 2">
    <location>
        <begin position="1"/>
        <end position="482"/>
    </location>
</feature>
<feature type="topological domain" description="Cytoplasmic" evidence="2">
    <location>
        <begin position="1"/>
        <end position="6"/>
    </location>
</feature>
<feature type="transmembrane region" description="Helical; Signal-anchor for type II membrane protein" evidence="2">
    <location>
        <begin position="7"/>
        <end position="23"/>
    </location>
</feature>
<feature type="topological domain" description="Extracellular" evidence="2">
    <location>
        <begin position="24"/>
        <end position="482"/>
    </location>
</feature>
<feature type="domain" description="Ig-like V-type 1">
    <location>
        <begin position="29"/>
        <end position="140"/>
    </location>
</feature>
<feature type="domain" description="Ig-like V-type 2">
    <location>
        <begin position="142"/>
        <end position="234"/>
    </location>
</feature>
<feature type="domain" description="Ig-like V-type 3">
    <location>
        <begin position="236"/>
        <end position="355"/>
    </location>
</feature>
<feature type="glycosylation site" description="N-linked (GlcNAc...) asparagine" evidence="2">
    <location>
        <position position="210"/>
    </location>
</feature>
<feature type="glycosylation site" description="N-linked (GlcNAc...) asparagine" evidence="2">
    <location>
        <position position="427"/>
    </location>
</feature>
<feature type="disulfide bond" evidence="3">
    <location>
        <begin position="50"/>
        <end position="124"/>
    </location>
</feature>
<feature type="disulfide bond" evidence="3">
    <location>
        <begin position="164"/>
        <end position="218"/>
    </location>
</feature>
<feature type="disulfide bond" evidence="3">
    <location>
        <begin position="267"/>
        <end position="341"/>
    </location>
</feature>
<feature type="splice variant" id="VSP_062051" description="In isoform 4.">
    <location>
        <begin position="28"/>
        <end position="237"/>
    </location>
</feature>
<feature type="splice variant" id="VSP_062052" description="In isoform 8.">
    <original>VRWYRSEPS</original>
    <variation>RNSRLSWLL</variation>
    <location>
        <begin position="63"/>
        <end position="71"/>
    </location>
</feature>
<feature type="splice variant" id="VSP_062053" description="In isoform 8.">
    <location>
        <begin position="72"/>
        <end position="482"/>
    </location>
</feature>
<feature type="splice variant" id="VSP_062054" description="In isoform 2 and isoform 3.">
    <location>
        <begin position="143"/>
        <end position="236"/>
    </location>
</feature>
<feature type="splice variant" id="VSP_062055" description="In isoform 3.">
    <original>SLGSS</original>
    <variation>WVLPH</variation>
    <location>
        <begin position="360"/>
        <end position="364"/>
    </location>
</feature>
<feature type="splice variant" id="VSP_062056" description="In isoform 3.">
    <location>
        <begin position="365"/>
        <end position="482"/>
    </location>
</feature>
<feature type="splice variant" id="VSP_062057" description="In isoform 1 and isoform 4.">
    <original>ES</original>
    <variation>GW</variation>
    <location>
        <begin position="454"/>
        <end position="455"/>
    </location>
</feature>
<feature type="splice variant" id="VSP_062058" description="In isoform 1 and isoform 4.">
    <location>
        <begin position="456"/>
        <end position="482"/>
    </location>
</feature>
<feature type="sequence variant" id="VAR_033602" description="In dbSNP:rs28362682.">
    <original>W</original>
    <variation>R</variation>
    <location>
        <position position="94"/>
    </location>
</feature>
<feature type="sequence variant" id="VAR_061307" description="In dbSNP:rs28362681.">
    <original>R</original>
    <variation>Q</variation>
    <location>
        <position position="181"/>
    </location>
</feature>
<feature type="sequence variant" id="VAR_049837" description="In dbSNP:rs9461742.">
    <original>V</original>
    <variation>M</variation>
    <location>
        <position position="188"/>
    </location>
</feature>
<feature type="sequence variant" id="VAR_021171" description="In dbSNP:rs2076523.">
    <original>K</original>
    <variation>E</variation>
    <location>
        <position position="196"/>
    </location>
</feature>
<feature type="sequence variant" id="VAR_061308" description="In dbSNP:rs28362680.">
    <original>A</original>
    <variation>V</variation>
    <location>
        <position position="202"/>
    </location>
</feature>
<feature type="sequence variant" id="VAR_033603" description="In dbSNP:rs34423804.">
    <original>D</original>
    <variation>V</variation>
    <location>
        <position position="283"/>
    </location>
</feature>
<feature type="sequence variant" id="VAR_029128" description="In dbSNP:rs28362679.">
    <original>S</original>
    <variation>L</variation>
    <location>
        <position position="334"/>
    </location>
</feature>
<feature type="sequence variant" id="VAR_033604" description="In dbSNP:rs35037492.">
    <original>A</original>
    <variation>T</variation>
    <location>
        <position position="352"/>
    </location>
</feature>
<feature type="sequence variant" id="VAR_049838" description="In dbSNP:rs2076530." evidence="4">
    <original>S</original>
    <variation>G</variation>
    <location>
        <position position="360"/>
    </location>
</feature>
<feature type="sequence variant" id="VAR_033605" description="In dbSNP:rs28362678.">
    <original>P</original>
    <variation>L</variation>
    <location>
        <position position="379"/>
    </location>
</feature>
<feature type="sequence variant" id="VAR_033606" description="In dbSNP:rs28362677.">
    <original>M</original>
    <variation>I</variation>
    <location>
        <position position="380"/>
    </location>
</feature>
<feature type="sequence variant" id="VAR_033607" description="In dbSNP:rs41521946.">
    <original>P</original>
    <variation>Q</variation>
    <location>
        <position position="393"/>
    </location>
</feature>
<feature type="sequence conflict" description="In Ref. 6; AAV91023." evidence="6" ref="6">
    <location>
        <position position="27"/>
    </location>
</feature>
<feature type="sequence conflict" description="In Ref. 5; AAI27643." evidence="6" ref="5">
    <original>S</original>
    <variation>G</variation>
    <location sequence="Q9UIR0-4">
        <position position="150"/>
    </location>
</feature>
<dbReference type="EMBL" id="AF186593">
    <property type="protein sequence ID" value="AAF05530.1"/>
    <property type="molecule type" value="Genomic_DNA"/>
</dbReference>
<dbReference type="EMBL" id="AF186588">
    <property type="protein sequence ID" value="AAF05530.1"/>
    <property type="status" value="JOINED"/>
    <property type="molecule type" value="Genomic_DNA"/>
</dbReference>
<dbReference type="EMBL" id="AF186589">
    <property type="protein sequence ID" value="AAF05530.1"/>
    <property type="status" value="JOINED"/>
    <property type="molecule type" value="Genomic_DNA"/>
</dbReference>
<dbReference type="EMBL" id="AF186591">
    <property type="protein sequence ID" value="AAF05530.1"/>
    <property type="status" value="JOINED"/>
    <property type="molecule type" value="Genomic_DNA"/>
</dbReference>
<dbReference type="EMBL" id="AF186592">
    <property type="protein sequence ID" value="AAF05530.1"/>
    <property type="status" value="JOINED"/>
    <property type="molecule type" value="Genomic_DNA"/>
</dbReference>
<dbReference type="EMBL" id="AF186590">
    <property type="protein sequence ID" value="AAF05530.1"/>
    <property type="status" value="JOINED"/>
    <property type="molecule type" value="Genomic_DNA"/>
</dbReference>
<dbReference type="EMBL" id="AY881999">
    <property type="protein sequence ID" value="AAX35330.1"/>
    <property type="molecule type" value="Genomic_DNA"/>
</dbReference>
<dbReference type="EMBL" id="AY881999">
    <property type="protein sequence ID" value="AAX35331.1"/>
    <property type="molecule type" value="Genomic_DNA"/>
</dbReference>
<dbReference type="EMBL" id="AL034394">
    <property type="protein sequence ID" value="CAI42180.1"/>
    <property type="status" value="ALT_SEQ"/>
    <property type="molecule type" value="Genomic_DNA"/>
</dbReference>
<dbReference type="EMBL" id="Z84814">
    <property type="protein sequence ID" value="CAI42180.1"/>
    <property type="status" value="JOINED"/>
    <property type="molecule type" value="Genomic_DNA"/>
</dbReference>
<dbReference type="EMBL" id="Z84814">
    <property type="protein sequence ID" value="CAC69895.2"/>
    <property type="status" value="ALT_SEQ"/>
    <property type="molecule type" value="Genomic_DNA"/>
</dbReference>
<dbReference type="EMBL" id="AL034394">
    <property type="protein sequence ID" value="CAC69895.2"/>
    <property type="status" value="JOINED"/>
    <property type="molecule type" value="Genomic_DNA"/>
</dbReference>
<dbReference type="EMBL" id="AL662796">
    <property type="status" value="NOT_ANNOTATED_CDS"/>
    <property type="molecule type" value="Genomic_DNA"/>
</dbReference>
<dbReference type="EMBL" id="BC119668">
    <property type="protein sequence ID" value="AAI19669.1"/>
    <property type="status" value="ALT_SEQ"/>
    <property type="molecule type" value="mRNA"/>
</dbReference>
<dbReference type="EMBL" id="BC127642">
    <property type="protein sequence ID" value="AAI27643.1"/>
    <property type="molecule type" value="mRNA"/>
</dbReference>
<dbReference type="EMBL" id="AY684332">
    <property type="protein sequence ID" value="AAV91022.1"/>
    <property type="molecule type" value="mRNA"/>
</dbReference>
<dbReference type="EMBL" id="AY684333">
    <property type="protein sequence ID" value="AAV91023.1"/>
    <property type="molecule type" value="mRNA"/>
</dbReference>
<dbReference type="CCDS" id="CCDS78126.1">
    <molecule id="Q9UIR0-7"/>
</dbReference>
<dbReference type="RefSeq" id="NP_001291490.1">
    <molecule id="Q9UIR0-7"/>
    <property type="nucleotide sequence ID" value="NM_001304561.2"/>
</dbReference>
<dbReference type="RefSeq" id="XP_016866546.1">
    <property type="nucleotide sequence ID" value="XM_017011057.1"/>
</dbReference>
<dbReference type="RefSeq" id="XP_054186295.1">
    <molecule id="Q9UIR0-7"/>
    <property type="nucleotide sequence ID" value="XM_054330320.1"/>
</dbReference>
<dbReference type="BioGRID" id="121112">
    <property type="interactions" value="180"/>
</dbReference>
<dbReference type="FunCoup" id="Q9UIR0">
    <property type="interactions" value="332"/>
</dbReference>
<dbReference type="IntAct" id="Q9UIR0">
    <property type="interactions" value="154"/>
</dbReference>
<dbReference type="STRING" id="9606.ENSP00000390613"/>
<dbReference type="GlyCosmos" id="Q9UIR0">
    <property type="glycosylation" value="2 sites, No reported glycans"/>
</dbReference>
<dbReference type="GlyGen" id="Q9UIR0">
    <property type="glycosylation" value="4 sites, 1 O-linked glycan (2 sites)"/>
</dbReference>
<dbReference type="iPTMnet" id="Q9UIR0"/>
<dbReference type="PhosphoSitePlus" id="Q9UIR0"/>
<dbReference type="BioMuta" id="BTNL2"/>
<dbReference type="DMDM" id="73921189"/>
<dbReference type="jPOST" id="Q9UIR0"/>
<dbReference type="MassIVE" id="Q9UIR0"/>
<dbReference type="PaxDb" id="9606-ENSP00000390613"/>
<dbReference type="PeptideAtlas" id="Q9UIR0"/>
<dbReference type="ProteomicsDB" id="30738"/>
<dbReference type="Antibodypedia" id="50239">
    <property type="antibodies" value="128 antibodies from 20 providers"/>
</dbReference>
<dbReference type="DNASU" id="56244"/>
<dbReference type="Ensembl" id="ENST00000416597.5">
    <molecule id="Q9UIR0-7"/>
    <property type="protein sequence ID" value="ENSP00000415396.2"/>
    <property type="gene ID" value="ENSG00000224770.7"/>
</dbReference>
<dbReference type="Ensembl" id="ENST00000422056.5">
    <molecule id="Q9UIR0-7"/>
    <property type="protein sequence ID" value="ENSP00000416544.2"/>
    <property type="gene ID" value="ENSG00000229597.7"/>
</dbReference>
<dbReference type="Ensembl" id="ENST00000445928.5">
    <molecule id="Q9UIR0-7"/>
    <property type="protein sequence ID" value="ENSP00000399884.2"/>
    <property type="gene ID" value="ENSG00000226127.7"/>
</dbReference>
<dbReference type="Ensembl" id="ENST00000447918.5">
    <molecule id="Q9UIR0-7"/>
    <property type="protein sequence ID" value="ENSP00000414811.2"/>
    <property type="gene ID" value="ENSG00000229741.7"/>
</dbReference>
<dbReference type="Ensembl" id="ENST00000454136.8">
    <molecule id="Q9UIR0-7"/>
    <property type="protein sequence ID" value="ENSP00000390613.3"/>
    <property type="gene ID" value="ENSG00000204290.11"/>
</dbReference>
<dbReference type="Ensembl" id="ENST00000544175.3">
    <molecule id="Q9UIR0-8"/>
    <property type="protein sequence ID" value="ENSP00000443364.2"/>
    <property type="gene ID" value="ENSG00000204290.11"/>
</dbReference>
<dbReference type="Ensembl" id="ENST00000548253.2">
    <property type="protein sequence ID" value="ENSP00000447733.1"/>
    <property type="gene ID" value="ENSG00000224242.7"/>
</dbReference>
<dbReference type="Ensembl" id="ENST00000548717.3">
    <property type="protein sequence ID" value="ENSP00000449356.1"/>
    <property type="gene ID" value="ENSG00000225412.7"/>
</dbReference>
<dbReference type="Ensembl" id="ENST00000548832.5">
    <molecule id="Q9UIR0-4"/>
    <property type="protein sequence ID" value="ENSP00000448852.2"/>
    <property type="gene ID" value="ENSG00000229741.7"/>
</dbReference>
<dbReference type="Ensembl" id="ENST00000549852.4">
    <property type="protein sequence ID" value="ENSP00000446915.2"/>
    <property type="gene ID" value="ENSG00000225845.7"/>
</dbReference>
<dbReference type="Ensembl" id="ENST00000550327.5">
    <molecule id="Q9UIR0-1"/>
    <property type="protein sequence ID" value="ENSP00000447985.1"/>
    <property type="gene ID" value="ENSG00000226127.7"/>
</dbReference>
<dbReference type="Ensembl" id="ENST00000550531.3">
    <molecule id="Q9UIR0-1"/>
    <property type="protein sequence ID" value="ENSP00000448023.1"/>
    <property type="gene ID" value="ENSG00000229597.7"/>
</dbReference>
<dbReference type="Ensembl" id="ENST00000551095.2">
    <molecule id="Q9UIR0-1"/>
    <property type="protein sequence ID" value="ENSP00000449546.1"/>
    <property type="gene ID" value="ENSG00000229741.7"/>
</dbReference>
<dbReference type="Ensembl" id="ENST00000551669.4">
    <property type="protein sequence ID" value="ENSP00000446794.1"/>
    <property type="gene ID" value="ENSG00000224242.7"/>
</dbReference>
<dbReference type="Ensembl" id="ENST00000551686.5">
    <property type="protein sequence ID" value="ENSP00000450139.1"/>
    <property type="gene ID" value="ENSG00000225412.7"/>
</dbReference>
<dbReference type="Ensembl" id="ENST00000552479.5">
    <molecule id="Q9UIR0-1"/>
    <property type="protein sequence ID" value="ENSP00000449365.1"/>
    <property type="gene ID" value="ENSG00000224770.7"/>
</dbReference>
<dbReference type="GeneID" id="56244"/>
<dbReference type="KEGG" id="hsa:56244"/>
<dbReference type="MANE-Select" id="ENST00000454136.8">
    <property type="protein sequence ID" value="ENSP00000390613.3"/>
    <property type="RefSeq nucleotide sequence ID" value="NM_001304561.2"/>
    <property type="RefSeq protein sequence ID" value="NP_001291490.1"/>
</dbReference>
<dbReference type="UCSC" id="uc003obg.1">
    <molecule id="Q9UIR0-7"/>
    <property type="organism name" value="human"/>
</dbReference>
<dbReference type="AGR" id="HGNC:1142"/>
<dbReference type="CTD" id="56244"/>
<dbReference type="DisGeNET" id="56244"/>
<dbReference type="GeneCards" id="BTNL2"/>
<dbReference type="HGNC" id="HGNC:1142">
    <property type="gene designation" value="BTNL2"/>
</dbReference>
<dbReference type="MalaCards" id="BTNL2"/>
<dbReference type="MIM" id="606000">
    <property type="type" value="gene"/>
</dbReference>
<dbReference type="MIM" id="612387">
    <property type="type" value="phenotype"/>
</dbReference>
<dbReference type="neXtProt" id="NX_Q9UIR0"/>
<dbReference type="OpenTargets" id="ENSG00000204290"/>
<dbReference type="Orphanet" id="797">
    <property type="disease" value="Sarcoidosis"/>
</dbReference>
<dbReference type="PharmGKB" id="PA25463"/>
<dbReference type="VEuPathDB" id="HostDB:ENSG00000204290"/>
<dbReference type="eggNOG" id="ENOG502QSRZ">
    <property type="taxonomic scope" value="Eukaryota"/>
</dbReference>
<dbReference type="GeneTree" id="ENSGT00940000162484"/>
<dbReference type="HOGENOM" id="CLU_032563_1_0_1"/>
<dbReference type="InParanoid" id="Q9UIR0"/>
<dbReference type="OMA" id="GEMQLMC"/>
<dbReference type="OrthoDB" id="10055806at2759"/>
<dbReference type="PAN-GO" id="Q9UIR0">
    <property type="GO annotations" value="4 GO annotations based on evolutionary models"/>
</dbReference>
<dbReference type="PhylomeDB" id="Q9UIR0"/>
<dbReference type="TreeFam" id="TF331083"/>
<dbReference type="PathwayCommons" id="Q9UIR0"/>
<dbReference type="Reactome" id="R-HSA-8851680">
    <property type="pathway name" value="Butyrophilin (BTN) family interactions"/>
</dbReference>
<dbReference type="SignaLink" id="Q9UIR0"/>
<dbReference type="BioGRID-ORCS" id="56244">
    <property type="hits" value="1 hit in 243 CRISPR screens"/>
</dbReference>
<dbReference type="GeneWiki" id="BTNL2"/>
<dbReference type="GenomeRNAi" id="56244"/>
<dbReference type="Pharos" id="Q9UIR0">
    <property type="development level" value="Tbio"/>
</dbReference>
<dbReference type="PRO" id="PR:Q9UIR0"/>
<dbReference type="Proteomes" id="UP000005640">
    <property type="component" value="Chromosome 6"/>
</dbReference>
<dbReference type="RNAct" id="Q9UIR0">
    <property type="molecule type" value="protein"/>
</dbReference>
<dbReference type="Bgee" id="ENSG00000204290">
    <property type="expression patterns" value="Expressed in sural nerve and 84 other cell types or tissues"/>
</dbReference>
<dbReference type="ExpressionAtlas" id="Q9UIR0">
    <property type="expression patterns" value="baseline and differential"/>
</dbReference>
<dbReference type="GO" id="GO:0009897">
    <property type="term" value="C:external side of plasma membrane"/>
    <property type="evidence" value="ECO:0000318"/>
    <property type="project" value="GO_Central"/>
</dbReference>
<dbReference type="GO" id="GO:0005886">
    <property type="term" value="C:plasma membrane"/>
    <property type="evidence" value="ECO:0000304"/>
    <property type="project" value="Reactome"/>
</dbReference>
<dbReference type="GO" id="GO:0005102">
    <property type="term" value="F:signaling receptor binding"/>
    <property type="evidence" value="ECO:0000318"/>
    <property type="project" value="GO_Central"/>
</dbReference>
<dbReference type="GO" id="GO:0050860">
    <property type="term" value="P:negative regulation of T cell receptor signaling pathway"/>
    <property type="evidence" value="ECO:0007669"/>
    <property type="project" value="Ensembl"/>
</dbReference>
<dbReference type="GO" id="GO:0032743">
    <property type="term" value="P:positive regulation of interleukin-2 production"/>
    <property type="evidence" value="ECO:0007669"/>
    <property type="project" value="Ensembl"/>
</dbReference>
<dbReference type="GO" id="GO:0042102">
    <property type="term" value="P:positive regulation of T cell proliferation"/>
    <property type="evidence" value="ECO:0007669"/>
    <property type="project" value="Ensembl"/>
</dbReference>
<dbReference type="GO" id="GO:0001817">
    <property type="term" value="P:regulation of cytokine production"/>
    <property type="evidence" value="ECO:0000318"/>
    <property type="project" value="GO_Central"/>
</dbReference>
<dbReference type="GO" id="GO:0050852">
    <property type="term" value="P:T cell receptor signaling pathway"/>
    <property type="evidence" value="ECO:0000318"/>
    <property type="project" value="GO_Central"/>
</dbReference>
<dbReference type="CDD" id="cd05713">
    <property type="entry name" value="IgV_MOG_like"/>
    <property type="match status" value="2"/>
</dbReference>
<dbReference type="FunFam" id="2.60.40.10:FF:000088">
    <property type="entry name" value="Butyrophilin subfamily 1 member A1"/>
    <property type="match status" value="2"/>
</dbReference>
<dbReference type="FunFam" id="2.60.40.10:FF:000183">
    <property type="entry name" value="Myelin-oligodendrocyte glycoprotein"/>
    <property type="match status" value="2"/>
</dbReference>
<dbReference type="Gene3D" id="2.60.40.10">
    <property type="entry name" value="Immunoglobulins"/>
    <property type="match status" value="4"/>
</dbReference>
<dbReference type="InterPro" id="IPR053896">
    <property type="entry name" value="BTN3A2-like_Ig-C"/>
</dbReference>
<dbReference type="InterPro" id="IPR007110">
    <property type="entry name" value="Ig-like_dom"/>
</dbReference>
<dbReference type="InterPro" id="IPR036179">
    <property type="entry name" value="Ig-like_dom_sf"/>
</dbReference>
<dbReference type="InterPro" id="IPR013783">
    <property type="entry name" value="Ig-like_fold"/>
</dbReference>
<dbReference type="InterPro" id="IPR003597">
    <property type="entry name" value="Ig_C1-set"/>
</dbReference>
<dbReference type="InterPro" id="IPR003599">
    <property type="entry name" value="Ig_sub"/>
</dbReference>
<dbReference type="InterPro" id="IPR013106">
    <property type="entry name" value="Ig_V-set"/>
</dbReference>
<dbReference type="InterPro" id="IPR050504">
    <property type="entry name" value="IgSF_BTN/MOG"/>
</dbReference>
<dbReference type="PANTHER" id="PTHR24100">
    <property type="entry name" value="BUTYROPHILIN"/>
    <property type="match status" value="1"/>
</dbReference>
<dbReference type="PANTHER" id="PTHR24100:SF105">
    <property type="entry name" value="BUTYROPHILIN-LIKE PROTEIN 2"/>
    <property type="match status" value="1"/>
</dbReference>
<dbReference type="Pfam" id="PF22705">
    <property type="entry name" value="C2-set_3"/>
    <property type="match status" value="2"/>
</dbReference>
<dbReference type="Pfam" id="PF07686">
    <property type="entry name" value="V-set"/>
    <property type="match status" value="2"/>
</dbReference>
<dbReference type="SMART" id="SM00409">
    <property type="entry name" value="IG"/>
    <property type="match status" value="3"/>
</dbReference>
<dbReference type="SMART" id="SM00407">
    <property type="entry name" value="IGc1"/>
    <property type="match status" value="1"/>
</dbReference>
<dbReference type="SMART" id="SM00406">
    <property type="entry name" value="IGv"/>
    <property type="match status" value="2"/>
</dbReference>
<dbReference type="SUPFAM" id="SSF48726">
    <property type="entry name" value="Immunoglobulin"/>
    <property type="match status" value="4"/>
</dbReference>
<dbReference type="PROSITE" id="PS50835">
    <property type="entry name" value="IG_LIKE"/>
    <property type="match status" value="3"/>
</dbReference>
<keyword id="KW-0025">Alternative splicing</keyword>
<keyword id="KW-1015">Disulfide bond</keyword>
<keyword id="KW-0325">Glycoprotein</keyword>
<keyword id="KW-0393">Immunoglobulin domain</keyword>
<keyword id="KW-0472">Membrane</keyword>
<keyword id="KW-1185">Reference proteome</keyword>
<keyword id="KW-0677">Repeat</keyword>
<keyword id="KW-0735">Signal-anchor</keyword>
<keyword id="KW-0812">Transmembrane</keyword>
<keyword id="KW-1133">Transmembrane helix</keyword>
<name>BTNL2_HUMAN</name>
<proteinExistence type="evidence at protein level"/>
<sequence length="482" mass="53517">MVDFPGYNLSGAVASFLFILLTMKQSEDFRVIGPAHPILAGVGEDALLTCQLLPKRTTMHVEVRWYRSEPSTPVFVHRDGVEVTEMQMEEYRGWVEWIENGIAKGNVALKIHNIQPSDNGQYWCHFQDGNYCGETSLLLKVAGLGSAPSIHMEGPGESGVQLVCTARGWFPEPQVYWEDIRGEKLLAVSEHRIQDKDGLFYAEATLVVRNASAESVSCLVHNPVLTEEKGSVISLPEKLQTELASLKVNGPSQPILVRVGEDIQLTCYLSPKANAQSMEVRWDRSHRYPAVHVYMDGDHVAGEQMAEYRGRTVLVSDAIDEGRLTLQILSARPSDDGQYRCLFEKDDVYQEASLDLKVVSLGSSPLITVEGQEDGEMQPMCSSDGWFPQPHVPWRDMEGKTIPSSSQALTQGSHGLFHVQTLLRVTNISAVDVTCSISIPFLGEEKIATFSLSESRMTFLWKTLLVWGLLLAVAVGLPRKRS</sequence>
<accession>Q9UIR0</accession>
<accession>A0PJV5</accession>
<accession>B0UYW9</accession>
<accession>B0V0N6</accession>
<accession>F8WBA1</accession>
<accession>O98261</accession>
<accession>Q08E96</accession>
<accession>Q58R22</accession>
<accession>Q58R23</accession>
<accession>Q5JYF9</accession>
<accession>Q5MP42</accession>
<accession>Q5MP43</accession>
<accession>Q5RIF8</accession>
<accession>Q5SP08</accession>
<accession>Q5SP09</accession>
<accession>Q5SRW3</accession>
<accession>Q5SRW4</accession>
<accession>Q5SU36</accession>
<accession>Q95HK0</accession>